<organism>
    <name type="scientific">Staphylococcus aureus</name>
    <dbReference type="NCBI Taxonomy" id="1280"/>
    <lineage>
        <taxon>Bacteria</taxon>
        <taxon>Bacillati</taxon>
        <taxon>Bacillota</taxon>
        <taxon>Bacilli</taxon>
        <taxon>Bacillales</taxon>
        <taxon>Staphylococcaceae</taxon>
        <taxon>Staphylococcus</taxon>
    </lineage>
</organism>
<accession>P0A0D6</accession>
<accession>P02909</accession>
<gene>
    <name evidence="11" type="primary">lacF</name>
</gene>
<dbReference type="EMBL" id="J03479">
    <property type="protein sequence ID" value="AAA26648.1"/>
    <property type="molecule type" value="Genomic_DNA"/>
</dbReference>
<dbReference type="PIR" id="A03406">
    <property type="entry name" value="WQSA3L"/>
</dbReference>
<dbReference type="RefSeq" id="WP_001078309.1">
    <property type="nucleotide sequence ID" value="NZ_WYDB01000011.1"/>
</dbReference>
<dbReference type="SMR" id="P0A0D6"/>
<dbReference type="TCDB" id="4.A.3.1.1">
    <property type="family name" value="the pts lactose-n,n'-diacetylchitobiose-Beta-glucoside (lac) family"/>
</dbReference>
<dbReference type="iPTMnet" id="P0A0D6"/>
<dbReference type="OMA" id="QAHHMQT"/>
<dbReference type="SABIO-RK" id="P0A0D6"/>
<dbReference type="GO" id="GO:0005737">
    <property type="term" value="C:cytoplasm"/>
    <property type="evidence" value="ECO:0007669"/>
    <property type="project" value="UniProtKB-SubCell"/>
</dbReference>
<dbReference type="GO" id="GO:0046872">
    <property type="term" value="F:metal ion binding"/>
    <property type="evidence" value="ECO:0007669"/>
    <property type="project" value="UniProtKB-KW"/>
</dbReference>
<dbReference type="GO" id="GO:0016740">
    <property type="term" value="F:transferase activity"/>
    <property type="evidence" value="ECO:0007669"/>
    <property type="project" value="UniProtKB-KW"/>
</dbReference>
<dbReference type="GO" id="GO:0009401">
    <property type="term" value="P:phosphoenolpyruvate-dependent sugar phosphotransferase system"/>
    <property type="evidence" value="ECO:0007669"/>
    <property type="project" value="UniProtKB-KW"/>
</dbReference>
<dbReference type="CDD" id="cd00215">
    <property type="entry name" value="PTS_IIA_lac"/>
    <property type="match status" value="1"/>
</dbReference>
<dbReference type="Gene3D" id="1.20.58.80">
    <property type="entry name" value="Phosphotransferase system, lactose/cellobiose-type IIA subunit"/>
    <property type="match status" value="1"/>
</dbReference>
<dbReference type="InterPro" id="IPR003188">
    <property type="entry name" value="PTS_IIA_lac/cel"/>
</dbReference>
<dbReference type="InterPro" id="IPR036542">
    <property type="entry name" value="PTS_IIA_lac/cel_sf"/>
</dbReference>
<dbReference type="NCBIfam" id="TIGR00823">
    <property type="entry name" value="EIIA-LAC"/>
    <property type="match status" value="1"/>
</dbReference>
<dbReference type="PANTHER" id="PTHR34382:SF9">
    <property type="entry name" value="PHOSPHOTRANSFERASE SYSTEM SUGAR-SPECIFIC EII COMPONENT"/>
    <property type="match status" value="1"/>
</dbReference>
<dbReference type="PANTHER" id="PTHR34382">
    <property type="entry name" value="PTS SYSTEM N,N'-DIACETYLCHITOBIOSE-SPECIFIC EIIA COMPONENT"/>
    <property type="match status" value="1"/>
</dbReference>
<dbReference type="Pfam" id="PF02255">
    <property type="entry name" value="PTS_IIA"/>
    <property type="match status" value="1"/>
</dbReference>
<dbReference type="PIRSF" id="PIRSF000699">
    <property type="entry name" value="PTS_IILac_III"/>
    <property type="match status" value="1"/>
</dbReference>
<dbReference type="SUPFAM" id="SSF46973">
    <property type="entry name" value="Enzyme IIa from lactose specific PTS, IIa-lac"/>
    <property type="match status" value="1"/>
</dbReference>
<dbReference type="PROSITE" id="PS51095">
    <property type="entry name" value="PTS_EIIA_TYPE_3"/>
    <property type="match status" value="1"/>
</dbReference>
<name>PTLA_STAAU</name>
<reference key="1">
    <citation type="journal article" date="1987" name="J. Biol. Chem.">
        <title>Identification of the genes for the lactose-specific components of the phosphotransferase system in the lac operon of Staphylococcus aureus.</title>
        <authorList>
            <person name="Breidt F. Jr."/>
            <person name="Hengstenberg W."/>
            <person name="Finkeldei U."/>
            <person name="Stewart G.C."/>
        </authorList>
    </citation>
    <scope>NUCLEOTIDE SEQUENCE [GENOMIC DNA]</scope>
    <scope>FUNCTION</scope>
</reference>
<reference key="2">
    <citation type="journal article" date="1973" name="J. Biol. Chem.">
        <title>Sugar transport. V. A trimeric lactose-specific phosphocarrier protein of the Staphylococcus aureus phosphotransferase system.</title>
        <authorList>
            <person name="Hays J.B."/>
            <person name="Simoni R.D."/>
            <person name="Roseman S."/>
        </authorList>
    </citation>
    <scope>PROTEIN SEQUENCE OF 1-31</scope>
    <scope>SUBUNIT</scope>
</reference>
<reference key="3">
    <citation type="journal article" date="1982" name="Biochemistry">
        <title>Phosphoenolpyruvate-dependent phosphotransferase system of Staphylococcus aureus: factor IIIlac, a trimeric phospho-carrier protein that also acts as a phase transfer catalyst.</title>
        <authorList>
            <person name="Deutscher J."/>
            <person name="Beyreuther K."/>
            <person name="Sobek H.M."/>
            <person name="Stuber K."/>
            <person name="Hengstenberg W."/>
        </authorList>
    </citation>
    <scope>PROTEIN SEQUENCE OF 1-38</scope>
    <scope>SUBUNIT</scope>
</reference>
<reference key="4">
    <citation type="journal article" date="1985" name="Biochemistry">
        <title>Amino acid sequence of the amphiphilic phosphocarrier protein factor IIILac of the lactose-specific phosphotransferase system of Staphylococcus.</title>
        <authorList>
            <person name="Stuber K."/>
            <person name="Deutscher J."/>
            <person name="Sobek H.M."/>
            <person name="Hengstenberg W."/>
            <person name="Beyreuther K."/>
        </authorList>
    </citation>
    <scope>PROTEIN SEQUENCE</scope>
</reference>
<reference key="5">
    <citation type="journal article" date="1963" name="J. Bacteriol.">
        <title>Induction of lactose utilization in Staphylococcus aureus.</title>
        <authorList>
            <person name="McClatchy J.K."/>
            <person name="Rosenblum E.D."/>
        </authorList>
    </citation>
    <scope>INDUCTION</scope>
</reference>
<reference key="6">
    <citation type="journal article" date="1968" name="Biochem. Biophys. Res. Commun.">
        <title>Resolution of a staphylococcal phosphotransferase system into four protein components and its relation to sugar transport.</title>
        <authorList>
            <person name="Simoni R.D."/>
            <person name="Smith M.F."/>
            <person name="Roseman S."/>
        </authorList>
    </citation>
    <scope>INDUCTION</scope>
</reference>
<reference key="7">
    <citation type="journal article" date="1973" name="J. Biol. Chem.">
        <title>Sugar transport. IV. Isolation and characterization of the lactose phosphotransferase system in Staphylococcus aureus.</title>
        <authorList>
            <person name="Simoni R.D."/>
            <person name="Nakazawa T."/>
            <person name="Hays J.B."/>
            <person name="Roseman S."/>
        </authorList>
    </citation>
    <scope>FUNCTION</scope>
    <scope>CATALYTIC ACTIVITY</scope>
    <scope>SUBSTRATE SPECIFICITY</scope>
</reference>
<reference key="8">
    <citation type="journal article" date="1973" name="J. Biol. Chem.">
        <title>Sugar transport. VI. Phosphoryl transfer in the lactose phosphotransferase system of Staphylococcus aureus.</title>
        <authorList>
            <person name="Simoni R.D."/>
            <person name="Hays J.B."/>
            <person name="Nakazawa T."/>
            <person name="Roseman S."/>
        </authorList>
    </citation>
    <scope>FUNCTION</scope>
    <scope>CATALYTIC ACTIVITY</scope>
    <scope>REACTION MECHANISM</scope>
</reference>
<reference key="9">
    <citation type="journal article" date="1981" name="Biochemistry">
        <title>Phosphoenolpyruvate-dependent phosphotransferase system of Staphylococcus aureus: 1H nuclear magnetic resonance studies on phosphorylated and unphosphorylated factor IIIlac and its interaction with the phosphocarrier protein HPr.</title>
        <authorList>
            <person name="Kalbitzer H.R."/>
            <person name="Deutscher J."/>
            <person name="Hengstenberg W."/>
            <person name="Rosch P."/>
        </authorList>
    </citation>
    <scope>ACTIVE SITE</scope>
    <scope>PHOSPHORYLATION AT HIS-78</scope>
</reference>
<reference key="10">
    <citation type="journal article" date="1991" name="Protein Eng.">
        <title>Enzyme IIIlac of the staphylococcal phosphoenolpyruvate-dependent phosphotransferase system: site-specific mutagenesis of histidine residues, biochemical characterization and 1H-NMR studies.</title>
        <authorList>
            <person name="Finkeldei U."/>
            <person name="Kalbitzer H.R."/>
            <person name="Eisermann R."/>
            <person name="Stewart G.C."/>
            <person name="Hengstenberg W."/>
        </authorList>
    </citation>
    <scope>ACTIVE SITE</scope>
    <scope>PHOSPHORYLATION AT HIS-78</scope>
    <scope>MUTAGENESIS OF HIS-78 AND HIS-82</scope>
</reference>
<feature type="chain" id="PRO_0000186604" description="PTS system lactose-specific EIIA component">
    <location>
        <begin position="1"/>
        <end position="103"/>
    </location>
</feature>
<feature type="domain" description="PTS EIIA type-3" evidence="2">
    <location>
        <begin position="4"/>
        <end position="102"/>
    </location>
</feature>
<feature type="active site" description="Tele-phosphohistidine intermediate" evidence="4 10">
    <location>
        <position position="78"/>
    </location>
</feature>
<feature type="binding site" evidence="1">
    <location>
        <position position="81"/>
    </location>
    <ligand>
        <name>Mg(2+)</name>
        <dbReference type="ChEBI" id="CHEBI:18420"/>
        <note>ligand shared between all trimeric partners</note>
    </ligand>
</feature>
<feature type="modified residue" description="Phosphohistidine; by HPr" evidence="2 13 15">
    <location>
        <position position="78"/>
    </location>
</feature>
<feature type="mutagenesis site" description="Abolished activity." evidence="4">
    <original>H</original>
    <variation>S</variation>
    <location>
        <position position="78"/>
    </location>
</feature>
<feature type="mutagenesis site" description="Reduced activity." evidence="4">
    <original>H</original>
    <variation>S</variation>
    <location>
        <position position="82"/>
    </location>
</feature>
<feature type="sequence conflict" description="In Ref. 4; AA sequence." evidence="12" ref="4">
    <original>E</original>
    <variation>Q</variation>
    <location>
        <position position="52"/>
    </location>
</feature>
<feature type="sequence conflict" description="In Ref. 4; AA sequence." evidence="12" ref="4">
    <original>MKH</original>
    <variation>HKK</variation>
    <location>
        <begin position="93"/>
        <end position="95"/>
    </location>
</feature>
<keyword id="KW-0963">Cytoplasm</keyword>
<keyword id="KW-0903">Direct protein sequencing</keyword>
<keyword id="KW-0460">Magnesium</keyword>
<keyword id="KW-0479">Metal-binding</keyword>
<keyword id="KW-0597">Phosphoprotein</keyword>
<keyword id="KW-0598">Phosphotransferase system</keyword>
<keyword id="KW-0762">Sugar transport</keyword>
<keyword id="KW-0808">Transferase</keyword>
<keyword id="KW-0813">Transport</keyword>
<comment type="function">
    <text evidence="5 7 14">The phosphoenolpyruvate-dependent sugar phosphotransferase system (sugar PTS), a major carbohydrate active transport system, catalyzes the phosphorylation of incoming sugar substrates concomitantly with their translocation across the cell membrane. The enzyme II LacEF PTS system is involved in lactose transport, but can also use galactose, isopropyl beta-thio-galactopyranoside and thiomethyl beta-D-galactopyranoside (TMG) as substrates.</text>
</comment>
<comment type="cofactor">
    <cofactor evidence="1">
        <name>Mg(2+)</name>
        <dbReference type="ChEBI" id="CHEBI:18420"/>
    </cofactor>
    <text evidence="1">Binds 1 Mg(2+) ion per trimer.</text>
</comment>
<comment type="subunit">
    <text evidence="6 9">Homotrimer.</text>
</comment>
<comment type="subcellular location">
    <subcellularLocation>
        <location evidence="12">Cytoplasm</location>
    </subcellularLocation>
</comment>
<comment type="induction">
    <text evidence="3 8">Induced by lactose, galactose and galactose-6-P. Repressed by glucose.</text>
</comment>
<comment type="domain">
    <text evidence="2">The PTS EIIA type-3 domain is phosphorylated by phospho-HPr on a histidyl residue. Then, it transfers the phosphoryl group to the PTS EIIB type-3 domain.</text>
</comment>
<comment type="caution">
    <text evidence="4 9 10">His-82, rather than His-78 in the same tryptic peptide, was identified in PubMed:7306504 as the probable site of phosphorylation. This misidentification was corrected in later work and confirmed in structural work on the enzyme from Lactococcus lactis.</text>
</comment>
<protein>
    <recommendedName>
        <fullName evidence="11">PTS system lactose-specific EIIA component</fullName>
    </recommendedName>
    <alternativeName>
        <fullName evidence="11">EIIA-Lac</fullName>
    </alternativeName>
    <alternativeName>
        <fullName evidence="11">EIII-Lac</fullName>
    </alternativeName>
    <alternativeName>
        <fullName evidence="11">Lactose-specific phosphotransferase enzyme IIA component</fullName>
    </alternativeName>
</protein>
<evidence type="ECO:0000250" key="1">
    <source>
        <dbReference type="UniProtKB" id="P23532"/>
    </source>
</evidence>
<evidence type="ECO:0000255" key="2">
    <source>
        <dbReference type="PROSITE-ProRule" id="PRU00418"/>
    </source>
</evidence>
<evidence type="ECO:0000269" key="3">
    <source>
    </source>
</evidence>
<evidence type="ECO:0000269" key="4">
    <source>
    </source>
</evidence>
<evidence type="ECO:0000269" key="5">
    <source>
    </source>
</evidence>
<evidence type="ECO:0000269" key="6">
    <source>
    </source>
</evidence>
<evidence type="ECO:0000269" key="7">
    <source>
    </source>
</evidence>
<evidence type="ECO:0000269" key="8">
    <source>
    </source>
</evidence>
<evidence type="ECO:0000269" key="9">
    <source>
    </source>
</evidence>
<evidence type="ECO:0000269" key="10">
    <source>
    </source>
</evidence>
<evidence type="ECO:0000303" key="11">
    <source>
    </source>
</evidence>
<evidence type="ECO:0000305" key="12"/>
<evidence type="ECO:0000305" key="13">
    <source>
    </source>
</evidence>
<evidence type="ECO:0000305" key="14">
    <source>
    </source>
</evidence>
<evidence type="ECO:0000305" key="15">
    <source>
    </source>
</evidence>
<sequence length="103" mass="11370">MNREEVQLLGFEIVAFAGDARSKFLEALTAAQAGDFAKADALIEEGNNCIAEAHRAQTSLLAKEAQGDDIAYSVTMMHGQDHLMTTILLKDLMKHLLEFYKRG</sequence>
<proteinExistence type="evidence at protein level"/>